<gene>
    <name type="ordered locus">MPN_524</name>
    <name type="ORF">G12_orf168</name>
    <name type="ORF">MP318</name>
</gene>
<comment type="similarity">
    <text evidence="1">Belongs to the UPF0134 family.</text>
</comment>
<sequence>MKEKISEKEYKALIRKIGKEHFDGEKEEYGDGTVGVWTYELRKYKLKPPVKVKYVTQEQFQEYKDSNNQRLIKIETTLAAQGEQIRIQVEQIKELQIEQKAQGETLKLILQTLQKMSDRLDKMEVKMDKMEEKMDKMEGKIDKIENRMDKMEVKMDKMEKRIDKLESK</sequence>
<accession>P75254</accession>
<organism>
    <name type="scientific">Mycoplasma pneumoniae (strain ATCC 29342 / M129 / Subtype 1)</name>
    <name type="common">Mycoplasmoides pneumoniae</name>
    <dbReference type="NCBI Taxonomy" id="272634"/>
    <lineage>
        <taxon>Bacteria</taxon>
        <taxon>Bacillati</taxon>
        <taxon>Mycoplasmatota</taxon>
        <taxon>Mycoplasmoidales</taxon>
        <taxon>Mycoplasmoidaceae</taxon>
        <taxon>Mycoplasmoides</taxon>
    </lineage>
</organism>
<proteinExistence type="inferred from homology"/>
<evidence type="ECO:0000305" key="1"/>
<dbReference type="EMBL" id="U00089">
    <property type="protein sequence ID" value="AAB95966.1"/>
    <property type="molecule type" value="Genomic_DNA"/>
</dbReference>
<dbReference type="PIR" id="S73644">
    <property type="entry name" value="S73644"/>
</dbReference>
<dbReference type="RefSeq" id="NP_110212.1">
    <property type="nucleotide sequence ID" value="NC_000912.1"/>
</dbReference>
<dbReference type="RefSeq" id="WP_010874880.1">
    <property type="nucleotide sequence ID" value="NZ_OU342337.1"/>
</dbReference>
<dbReference type="SMR" id="P75254"/>
<dbReference type="IntAct" id="P75254">
    <property type="interactions" value="1"/>
</dbReference>
<dbReference type="STRING" id="272634.MPN_524"/>
<dbReference type="EnsemblBacteria" id="AAB95966">
    <property type="protein sequence ID" value="AAB95966"/>
    <property type="gene ID" value="MPN_524"/>
</dbReference>
<dbReference type="KEGG" id="mpn:MPN_524"/>
<dbReference type="PATRIC" id="fig|272634.6.peg.582"/>
<dbReference type="HOGENOM" id="CLU_137918_0_0_14"/>
<dbReference type="BioCyc" id="MPNE272634:G1GJ3-863-MONOMER"/>
<dbReference type="Proteomes" id="UP000000808">
    <property type="component" value="Chromosome"/>
</dbReference>
<dbReference type="Gene3D" id="1.20.5.170">
    <property type="match status" value="1"/>
</dbReference>
<dbReference type="Gene3D" id="6.10.250.40">
    <property type="match status" value="1"/>
</dbReference>
<dbReference type="InterPro" id="IPR002862">
    <property type="entry name" value="DUF16"/>
</dbReference>
<dbReference type="Pfam" id="PF01519">
    <property type="entry name" value="DUF16"/>
    <property type="match status" value="1"/>
</dbReference>
<dbReference type="SUPFAM" id="SSF144266">
    <property type="entry name" value="MPN010-like"/>
    <property type="match status" value="1"/>
</dbReference>
<protein>
    <recommendedName>
        <fullName>UPF0134 protein MPN_524</fullName>
    </recommendedName>
</protein>
<feature type="chain" id="PRO_0000221612" description="UPF0134 protein MPN_524">
    <location>
        <begin position="1"/>
        <end position="168"/>
    </location>
</feature>
<keyword id="KW-1185">Reference proteome</keyword>
<name>Y524_MYCPN</name>
<reference key="1">
    <citation type="journal article" date="1996" name="Nucleic Acids Res.">
        <title>Complete sequence analysis of the genome of the bacterium Mycoplasma pneumoniae.</title>
        <authorList>
            <person name="Himmelreich R."/>
            <person name="Hilbert H."/>
            <person name="Plagens H."/>
            <person name="Pirkl E."/>
            <person name="Li B.-C."/>
            <person name="Herrmann R."/>
        </authorList>
    </citation>
    <scope>NUCLEOTIDE SEQUENCE [LARGE SCALE GENOMIC DNA]</scope>
    <source>
        <strain>ATCC 29342 / M129 / Subtype 1</strain>
    </source>
</reference>